<reference key="1">
    <citation type="journal article" date="2005" name="Mol. Biol. Evol.">
        <title>Evolution of bitter taste receptors in humans and apes.</title>
        <authorList>
            <person name="Fischer A."/>
            <person name="Gilad Y."/>
            <person name="Man O."/>
            <person name="Paeaebo S."/>
        </authorList>
    </citation>
    <scope>NUCLEOTIDE SEQUENCE [GENOMIC DNA]</scope>
</reference>
<protein>
    <recommendedName>
        <fullName>Taste receptor type 2 member 10</fullName>
        <shortName>T2R10</shortName>
    </recommendedName>
</protein>
<feature type="chain" id="PRO_0000082241" description="Taste receptor type 2 member 10">
    <location>
        <begin position="1"/>
        <end position="307"/>
    </location>
</feature>
<feature type="topological domain" description="Extracellular" evidence="2">
    <location>
        <begin position="1"/>
        <end position="6"/>
    </location>
</feature>
<feature type="transmembrane region" description="Helical; Name=1" evidence="2">
    <location>
        <begin position="7"/>
        <end position="27"/>
    </location>
</feature>
<feature type="topological domain" description="Cytoplasmic" evidence="2">
    <location>
        <begin position="28"/>
        <end position="42"/>
    </location>
</feature>
<feature type="transmembrane region" description="Helical; Name=2" evidence="2">
    <location>
        <begin position="43"/>
        <end position="63"/>
    </location>
</feature>
<feature type="topological domain" description="Extracellular" evidence="2">
    <location>
        <begin position="64"/>
        <end position="100"/>
    </location>
</feature>
<feature type="transmembrane region" description="Helical; Name=3" evidence="2">
    <location>
        <begin position="101"/>
        <end position="121"/>
    </location>
</feature>
<feature type="topological domain" description="Cytoplasmic" evidence="2">
    <location>
        <begin position="122"/>
        <end position="126"/>
    </location>
</feature>
<feature type="transmembrane region" description="Helical; Name=4" evidence="2">
    <location>
        <begin position="127"/>
        <end position="147"/>
    </location>
</feature>
<feature type="topological domain" description="Extracellular" evidence="2">
    <location>
        <begin position="148"/>
        <end position="179"/>
    </location>
</feature>
<feature type="transmembrane region" description="Helical; Name=5" evidence="2">
    <location>
        <begin position="180"/>
        <end position="200"/>
    </location>
</feature>
<feature type="topological domain" description="Cytoplasmic" evidence="2">
    <location>
        <begin position="201"/>
        <end position="227"/>
    </location>
</feature>
<feature type="transmembrane region" description="Helical; Name=6" evidence="2">
    <location>
        <begin position="228"/>
        <end position="248"/>
    </location>
</feature>
<feature type="topological domain" description="Extracellular" evidence="2">
    <location>
        <begin position="249"/>
        <end position="257"/>
    </location>
</feature>
<feature type="transmembrane region" description="Helical; Name=7" evidence="2">
    <location>
        <begin position="258"/>
        <end position="278"/>
    </location>
</feature>
<feature type="topological domain" description="Cytoplasmic" evidence="2">
    <location>
        <begin position="279"/>
        <end position="307"/>
    </location>
</feature>
<feature type="glycosylation site" description="N-linked (GlcNAc...) asparagine" evidence="2">
    <location>
        <position position="92"/>
    </location>
</feature>
<feature type="glycosylation site" description="N-linked (GlcNAc...) asparagine" evidence="2">
    <location>
        <position position="158"/>
    </location>
</feature>
<dbReference type="EMBL" id="AY724827">
    <property type="protein sequence ID" value="AAU21064.1"/>
    <property type="molecule type" value="Genomic_DNA"/>
</dbReference>
<dbReference type="SMR" id="Q646F5"/>
<dbReference type="GlyCosmos" id="Q646F5">
    <property type="glycosylation" value="2 sites, No reported glycans"/>
</dbReference>
<dbReference type="GO" id="GO:0005886">
    <property type="term" value="C:plasma membrane"/>
    <property type="evidence" value="ECO:0007669"/>
    <property type="project" value="UniProtKB-ARBA"/>
</dbReference>
<dbReference type="GO" id="GO:0033038">
    <property type="term" value="F:bitter taste receptor activity"/>
    <property type="evidence" value="ECO:0007669"/>
    <property type="project" value="InterPro"/>
</dbReference>
<dbReference type="GO" id="GO:0004930">
    <property type="term" value="F:G protein-coupled receptor activity"/>
    <property type="evidence" value="ECO:0007669"/>
    <property type="project" value="UniProtKB-KW"/>
</dbReference>
<dbReference type="CDD" id="cd15021">
    <property type="entry name" value="7tm_TAS2R10"/>
    <property type="match status" value="1"/>
</dbReference>
<dbReference type="FunFam" id="1.20.1070.10:FF:000042">
    <property type="entry name" value="Taste receptor type 2 member 7"/>
    <property type="match status" value="1"/>
</dbReference>
<dbReference type="Gene3D" id="1.20.1070.10">
    <property type="entry name" value="Rhodopsin 7-helix transmembrane proteins"/>
    <property type="match status" value="1"/>
</dbReference>
<dbReference type="InterPro" id="IPR007960">
    <property type="entry name" value="TAS2R"/>
</dbReference>
<dbReference type="PANTHER" id="PTHR11394">
    <property type="entry name" value="TASTE RECEPTOR TYPE 2"/>
    <property type="match status" value="1"/>
</dbReference>
<dbReference type="PANTHER" id="PTHR11394:SF63">
    <property type="entry name" value="TASTE RECEPTOR TYPE 2 MEMBER 10"/>
    <property type="match status" value="1"/>
</dbReference>
<dbReference type="Pfam" id="PF05296">
    <property type="entry name" value="TAS2R"/>
    <property type="match status" value="1"/>
</dbReference>
<dbReference type="SUPFAM" id="SSF81321">
    <property type="entry name" value="Family A G protein-coupled receptor-like"/>
    <property type="match status" value="1"/>
</dbReference>
<accession>Q646F5</accession>
<sequence length="307" mass="35154">MLSVVEGILILVVISESVFGVLGNGFIGLVNCIDCAKNKLSTIGFILTGLAISRIFLIWIIITDGFIQIFSPDVYASGNLIEYISYFWVITNQSSIWFATSLSIFYFLKIANFSNYIFLWLKSRINRVLPLLMGFLLISCLLNFAYIVKILNDLKMKNDTVWRLNMYKSEYFIKQLLLNLGVIFFFTLSLITSVLLIISLWRHNRQMQSNVTGLRDSITEAHVKAMKVLISFIILFILYFIGIAIEISYFTVPENKLLLIFGMTTTAIYPWGHSFILILGNSKLKQASLRVLQQLKCCEERKNLRAT</sequence>
<comment type="function">
    <text evidence="1">Receptor that may play a role in the perception of bitterness and is gustducin-linked. May play a role in sensing the chemical composition of the gastrointestinal content. The activity of this receptor may stimulate alpha gustducin, mediate PLC-beta-2 activation and lead to the gating of TRPM5 (By similarity).</text>
</comment>
<comment type="subcellular location">
    <subcellularLocation>
        <location>Membrane</location>
        <topology>Multi-pass membrane protein</topology>
    </subcellularLocation>
</comment>
<comment type="miscellaneous">
    <text>Most taste cells may be activated by a limited number of bitter compounds; individual taste cells can discriminate among bitter stimuli.</text>
</comment>
<comment type="similarity">
    <text evidence="3">Belongs to the G-protein coupled receptor T2R family.</text>
</comment>
<organism>
    <name type="scientific">Papio hamadryas</name>
    <name type="common">Hamadryas baboon</name>
    <dbReference type="NCBI Taxonomy" id="9557"/>
    <lineage>
        <taxon>Eukaryota</taxon>
        <taxon>Metazoa</taxon>
        <taxon>Chordata</taxon>
        <taxon>Craniata</taxon>
        <taxon>Vertebrata</taxon>
        <taxon>Euteleostomi</taxon>
        <taxon>Mammalia</taxon>
        <taxon>Eutheria</taxon>
        <taxon>Euarchontoglires</taxon>
        <taxon>Primates</taxon>
        <taxon>Haplorrhini</taxon>
        <taxon>Catarrhini</taxon>
        <taxon>Cercopithecidae</taxon>
        <taxon>Cercopithecinae</taxon>
        <taxon>Papio</taxon>
    </lineage>
</organism>
<proteinExistence type="inferred from homology"/>
<name>T2R10_PAPHA</name>
<keyword id="KW-0297">G-protein coupled receptor</keyword>
<keyword id="KW-0325">Glycoprotein</keyword>
<keyword id="KW-0472">Membrane</keyword>
<keyword id="KW-0675">Receptor</keyword>
<keyword id="KW-0716">Sensory transduction</keyword>
<keyword id="KW-0919">Taste</keyword>
<keyword id="KW-0807">Transducer</keyword>
<keyword id="KW-0812">Transmembrane</keyword>
<keyword id="KW-1133">Transmembrane helix</keyword>
<evidence type="ECO:0000250" key="1"/>
<evidence type="ECO:0000255" key="2"/>
<evidence type="ECO:0000305" key="3"/>
<gene>
    <name type="primary">TAS2R10</name>
</gene>